<gene>
    <name evidence="1" type="primary">ppaC</name>
    <name type="ordered locus">BLi03882</name>
    <name type="ordered locus">BL02502</name>
</gene>
<reference key="1">
    <citation type="journal article" date="2004" name="J. Mol. Microbiol. Biotechnol.">
        <title>The complete genome sequence of Bacillus licheniformis DSM13, an organism with great industrial potential.</title>
        <authorList>
            <person name="Veith B."/>
            <person name="Herzberg C."/>
            <person name="Steckel S."/>
            <person name="Feesche J."/>
            <person name="Maurer K.H."/>
            <person name="Ehrenreich P."/>
            <person name="Baeumer S."/>
            <person name="Henne A."/>
            <person name="Liesegang H."/>
            <person name="Merkl R."/>
            <person name="Ehrenreich A."/>
            <person name="Gottschalk G."/>
        </authorList>
    </citation>
    <scope>NUCLEOTIDE SEQUENCE [LARGE SCALE GENOMIC DNA]</scope>
    <source>
        <strain>ATCC 14580 / DSM 13 / JCM 2505 / CCUG 7422 / NBRC 12200 / NCIMB 9375 / NCTC 10341 / NRRL NRS-1264 / Gibson 46</strain>
    </source>
</reference>
<reference key="2">
    <citation type="journal article" date="2004" name="Genome Biol.">
        <title>Complete genome sequence of the industrial bacterium Bacillus licheniformis and comparisons with closely related Bacillus species.</title>
        <authorList>
            <person name="Rey M.W."/>
            <person name="Ramaiya P."/>
            <person name="Nelson B.A."/>
            <person name="Brody-Karpin S.D."/>
            <person name="Zaretsky E.J."/>
            <person name="Tang M."/>
            <person name="Lopez de Leon A."/>
            <person name="Xiang H."/>
            <person name="Gusti V."/>
            <person name="Clausen I.G."/>
            <person name="Olsen P.B."/>
            <person name="Rasmussen M.D."/>
            <person name="Andersen J.T."/>
            <person name="Joergensen P.L."/>
            <person name="Larsen T.S."/>
            <person name="Sorokin A."/>
            <person name="Bolotin A."/>
            <person name="Lapidus A."/>
            <person name="Galleron N."/>
            <person name="Ehrlich S.D."/>
            <person name="Berka R.M."/>
        </authorList>
    </citation>
    <scope>NUCLEOTIDE SEQUENCE [LARGE SCALE GENOMIC DNA]</scope>
    <source>
        <strain>ATCC 14580 / DSM 13 / JCM 2505 / CCUG 7422 / NBRC 12200 / NCIMB 9375 / NCTC 10341 / NRRL NRS-1264 / Gibson 46</strain>
    </source>
</reference>
<dbReference type="EC" id="3.6.1.1" evidence="1"/>
<dbReference type="EMBL" id="CP000002">
    <property type="protein sequence ID" value="AAU25322.1"/>
    <property type="molecule type" value="Genomic_DNA"/>
</dbReference>
<dbReference type="EMBL" id="AE017333">
    <property type="protein sequence ID" value="AAU42696.1"/>
    <property type="molecule type" value="Genomic_DNA"/>
</dbReference>
<dbReference type="RefSeq" id="WP_003185920.1">
    <property type="nucleotide sequence ID" value="NC_006322.1"/>
</dbReference>
<dbReference type="SMR" id="Q65E18"/>
<dbReference type="STRING" id="279010.BL02502"/>
<dbReference type="KEGG" id="bld:BLi03882"/>
<dbReference type="KEGG" id="bli:BL02502"/>
<dbReference type="PATRIC" id="fig|279010.13.peg.3951"/>
<dbReference type="eggNOG" id="COG1227">
    <property type="taxonomic scope" value="Bacteria"/>
</dbReference>
<dbReference type="HOGENOM" id="CLU_025243_0_1_9"/>
<dbReference type="Proteomes" id="UP000000606">
    <property type="component" value="Chromosome"/>
</dbReference>
<dbReference type="GO" id="GO:0005737">
    <property type="term" value="C:cytoplasm"/>
    <property type="evidence" value="ECO:0007669"/>
    <property type="project" value="UniProtKB-SubCell"/>
</dbReference>
<dbReference type="GO" id="GO:0004427">
    <property type="term" value="F:inorganic diphosphate phosphatase activity"/>
    <property type="evidence" value="ECO:0007669"/>
    <property type="project" value="UniProtKB-UniRule"/>
</dbReference>
<dbReference type="GO" id="GO:0030145">
    <property type="term" value="F:manganese ion binding"/>
    <property type="evidence" value="ECO:0007669"/>
    <property type="project" value="UniProtKB-UniRule"/>
</dbReference>
<dbReference type="FunFam" id="3.10.310.20:FF:000001">
    <property type="entry name" value="Probable manganese-dependent inorganic pyrophosphatase"/>
    <property type="match status" value="1"/>
</dbReference>
<dbReference type="FunFam" id="3.90.1640.10:FF:000001">
    <property type="entry name" value="Probable manganese-dependent inorganic pyrophosphatase"/>
    <property type="match status" value="1"/>
</dbReference>
<dbReference type="Gene3D" id="3.10.310.20">
    <property type="entry name" value="DHHA2 domain"/>
    <property type="match status" value="1"/>
</dbReference>
<dbReference type="Gene3D" id="3.90.1640.10">
    <property type="entry name" value="inorganic pyrophosphatase (n-terminal core)"/>
    <property type="match status" value="1"/>
</dbReference>
<dbReference type="HAMAP" id="MF_00207">
    <property type="entry name" value="PPase_C"/>
    <property type="match status" value="1"/>
</dbReference>
<dbReference type="InterPro" id="IPR001667">
    <property type="entry name" value="DDH_dom"/>
</dbReference>
<dbReference type="InterPro" id="IPR038763">
    <property type="entry name" value="DHH_sf"/>
</dbReference>
<dbReference type="InterPro" id="IPR004097">
    <property type="entry name" value="DHHA2"/>
</dbReference>
<dbReference type="InterPro" id="IPR038222">
    <property type="entry name" value="DHHA2_dom_sf"/>
</dbReference>
<dbReference type="InterPro" id="IPR022934">
    <property type="entry name" value="Mn-dep_inorganic_PyrPase"/>
</dbReference>
<dbReference type="NCBIfam" id="NF003877">
    <property type="entry name" value="PRK05427.1"/>
    <property type="match status" value="1"/>
</dbReference>
<dbReference type="PANTHER" id="PTHR12112">
    <property type="entry name" value="BNIP - RELATED"/>
    <property type="match status" value="1"/>
</dbReference>
<dbReference type="PANTHER" id="PTHR12112:SF22">
    <property type="entry name" value="MANGANESE-DEPENDENT INORGANIC PYROPHOSPHATASE-RELATED"/>
    <property type="match status" value="1"/>
</dbReference>
<dbReference type="Pfam" id="PF01368">
    <property type="entry name" value="DHH"/>
    <property type="match status" value="1"/>
</dbReference>
<dbReference type="Pfam" id="PF02833">
    <property type="entry name" value="DHHA2"/>
    <property type="match status" value="1"/>
</dbReference>
<dbReference type="SMART" id="SM01131">
    <property type="entry name" value="DHHA2"/>
    <property type="match status" value="1"/>
</dbReference>
<dbReference type="SUPFAM" id="SSF64182">
    <property type="entry name" value="DHH phosphoesterases"/>
    <property type="match status" value="1"/>
</dbReference>
<feature type="chain" id="PRO_1000012310" description="Probable manganese-dependent inorganic pyrophosphatase">
    <location>
        <begin position="1"/>
        <end position="309"/>
    </location>
</feature>
<feature type="binding site" evidence="1">
    <location>
        <position position="9"/>
    </location>
    <ligand>
        <name>Mn(2+)</name>
        <dbReference type="ChEBI" id="CHEBI:29035"/>
        <label>1</label>
    </ligand>
</feature>
<feature type="binding site" evidence="1">
    <location>
        <position position="13"/>
    </location>
    <ligand>
        <name>Mn(2+)</name>
        <dbReference type="ChEBI" id="CHEBI:29035"/>
        <label>1</label>
    </ligand>
</feature>
<feature type="binding site" evidence="1">
    <location>
        <position position="15"/>
    </location>
    <ligand>
        <name>Mn(2+)</name>
        <dbReference type="ChEBI" id="CHEBI:29035"/>
        <label>2</label>
    </ligand>
</feature>
<feature type="binding site" evidence="1">
    <location>
        <position position="75"/>
    </location>
    <ligand>
        <name>Mn(2+)</name>
        <dbReference type="ChEBI" id="CHEBI:29035"/>
        <label>1</label>
    </ligand>
</feature>
<feature type="binding site" evidence="1">
    <location>
        <position position="75"/>
    </location>
    <ligand>
        <name>Mn(2+)</name>
        <dbReference type="ChEBI" id="CHEBI:29035"/>
        <label>2</label>
    </ligand>
</feature>
<feature type="binding site" evidence="1">
    <location>
        <position position="97"/>
    </location>
    <ligand>
        <name>Mn(2+)</name>
        <dbReference type="ChEBI" id="CHEBI:29035"/>
        <label>2</label>
    </ligand>
</feature>
<feature type="binding site" evidence="1">
    <location>
        <position position="149"/>
    </location>
    <ligand>
        <name>Mn(2+)</name>
        <dbReference type="ChEBI" id="CHEBI:29035"/>
        <label>2</label>
    </ligand>
</feature>
<accession>Q65E18</accession>
<accession>Q62PI9</accession>
<protein>
    <recommendedName>
        <fullName evidence="1">Probable manganese-dependent inorganic pyrophosphatase</fullName>
        <ecNumber evidence="1">3.6.1.1</ecNumber>
    </recommendedName>
    <alternativeName>
        <fullName evidence="1">Pyrophosphate phospho-hydrolase</fullName>
        <shortName evidence="1">PPase</shortName>
    </alternativeName>
</protein>
<proteinExistence type="inferred from homology"/>
<evidence type="ECO:0000255" key="1">
    <source>
        <dbReference type="HAMAP-Rule" id="MF_00207"/>
    </source>
</evidence>
<organism>
    <name type="scientific">Bacillus licheniformis (strain ATCC 14580 / DSM 13 / JCM 2505 / CCUG 7422 / NBRC 12200 / NCIMB 9375 / NCTC 10341 / NRRL NRS-1264 / Gibson 46)</name>
    <dbReference type="NCBI Taxonomy" id="279010"/>
    <lineage>
        <taxon>Bacteria</taxon>
        <taxon>Bacillati</taxon>
        <taxon>Bacillota</taxon>
        <taxon>Bacilli</taxon>
        <taxon>Bacillales</taxon>
        <taxon>Bacillaceae</taxon>
        <taxon>Bacillus</taxon>
    </lineage>
</organism>
<name>PPAC_BACLD</name>
<keyword id="KW-0963">Cytoplasm</keyword>
<keyword id="KW-0378">Hydrolase</keyword>
<keyword id="KW-0464">Manganese</keyword>
<keyword id="KW-0479">Metal-binding</keyword>
<keyword id="KW-1185">Reference proteome</keyword>
<comment type="catalytic activity">
    <reaction evidence="1">
        <text>diphosphate + H2O = 2 phosphate + H(+)</text>
        <dbReference type="Rhea" id="RHEA:24576"/>
        <dbReference type="ChEBI" id="CHEBI:15377"/>
        <dbReference type="ChEBI" id="CHEBI:15378"/>
        <dbReference type="ChEBI" id="CHEBI:33019"/>
        <dbReference type="ChEBI" id="CHEBI:43474"/>
        <dbReference type="EC" id="3.6.1.1"/>
    </reaction>
</comment>
<comment type="cofactor">
    <cofactor evidence="1">
        <name>Mn(2+)</name>
        <dbReference type="ChEBI" id="CHEBI:29035"/>
    </cofactor>
    <text evidence="1">Binds 2 manganese ions per subunit.</text>
</comment>
<comment type="subcellular location">
    <subcellularLocation>
        <location evidence="1">Cytoplasm</location>
    </subcellularLocation>
</comment>
<comment type="similarity">
    <text evidence="1">Belongs to the PPase class C family.</text>
</comment>
<sequence length="309" mass="33460">MSKVLIFGHKNPDTDTICSAIAYAELKKELGMDAEPVRLGEINGETEYALKKFNAEVPRLVNTVANETDSVILVDHNERQQSVDDLDQVRVLEVIDHHRIANFETSDPLYYRAEPVGCTATILNKLYKENGVEIKKDIAGLMLSAIISDSLLFKSPTCTEEDVKAAKELAAIAGVDADSYGLDMLKAGADLSAKTIPQLLSLDAKEFTMGSHKVEIAQVNTVDTNDVLSRKEEVDAELAKAVSEKGLDLFVFVVTDILTNDSVVVASGQAAQAVEKAFNVTLADNTATLKGVVSRKKQIVPPLTEALKG</sequence>